<comment type="function">
    <text evidence="1">Participates actively in the response to hyperosmotic and heat shock by preventing the aggregation of stress-denatured proteins, in association with DnaK and GrpE. It is the nucleotide exchange factor for DnaK and may function as a thermosensor. Unfolded proteins bind initially to DnaJ; upon interaction with the DnaJ-bound protein, DnaK hydrolyzes its bound ATP, resulting in the formation of a stable complex. GrpE releases ADP from DnaK; ATP binding to DnaK triggers the release of the substrate protein, thus completing the reaction cycle. Several rounds of ATP-dependent interactions between DnaJ, DnaK and GrpE are required for fully efficient folding.</text>
</comment>
<comment type="subunit">
    <text evidence="1">Homodimer.</text>
</comment>
<comment type="subcellular location">
    <subcellularLocation>
        <location evidence="1">Cytoplasm</location>
    </subcellularLocation>
</comment>
<comment type="similarity">
    <text evidence="1">Belongs to the GrpE family.</text>
</comment>
<feature type="chain" id="PRO_1000073070" description="Protein GrpE">
    <location>
        <begin position="1"/>
        <end position="237"/>
    </location>
</feature>
<feature type="region of interest" description="Disordered" evidence="2">
    <location>
        <begin position="24"/>
        <end position="56"/>
    </location>
</feature>
<feature type="region of interest" description="Disordered" evidence="2">
    <location>
        <begin position="204"/>
        <end position="237"/>
    </location>
</feature>
<proteinExistence type="inferred from homology"/>
<keyword id="KW-0143">Chaperone</keyword>
<keyword id="KW-0963">Cytoplasm</keyword>
<keyword id="KW-1185">Reference proteome</keyword>
<keyword id="KW-0346">Stress response</keyword>
<accession>Q2JH51</accession>
<protein>
    <recommendedName>
        <fullName evidence="1">Protein GrpE</fullName>
    </recommendedName>
    <alternativeName>
        <fullName evidence="1">HSP-70 cofactor</fullName>
    </alternativeName>
</protein>
<sequence length="237" mass="26792">MAPEDTYPELQEEEIDVEAELEKLILEDSEAEAGTSSGETAAEPSPDPGEALKQLQHELEVVRQQLKEKEDAYLRLYADFENYRRRTQREKEEFSQKERQKFVLEILPVVDSFERAQQQLKLETDRERELHNSYQSVYRLLVECLKKMGVSRMKSVGQPFDPNLHEAIARQPSPDYPEDVVAVEYQPGYKLGDLVIRHAMVAVSAGSPSSEPSPPAQATIEAGPENTPASPQNPQPS</sequence>
<organism>
    <name type="scientific">Synechococcus sp. (strain JA-2-3B'a(2-13))</name>
    <name type="common">Cyanobacteria bacterium Yellowstone B-Prime</name>
    <dbReference type="NCBI Taxonomy" id="321332"/>
    <lineage>
        <taxon>Bacteria</taxon>
        <taxon>Bacillati</taxon>
        <taxon>Cyanobacteriota</taxon>
        <taxon>Cyanophyceae</taxon>
        <taxon>Synechococcales</taxon>
        <taxon>Synechococcaceae</taxon>
        <taxon>Synechococcus</taxon>
    </lineage>
</organism>
<gene>
    <name evidence="1" type="primary">grpE</name>
    <name type="ordered locus">CYB_2933</name>
</gene>
<dbReference type="EMBL" id="CP000240">
    <property type="protein sequence ID" value="ABD03852.1"/>
    <property type="molecule type" value="Genomic_DNA"/>
</dbReference>
<dbReference type="SMR" id="Q2JH51"/>
<dbReference type="STRING" id="321332.CYB_2933"/>
<dbReference type="KEGG" id="cyb:CYB_2933"/>
<dbReference type="eggNOG" id="COG0576">
    <property type="taxonomic scope" value="Bacteria"/>
</dbReference>
<dbReference type="HOGENOM" id="CLU_057217_5_1_3"/>
<dbReference type="Proteomes" id="UP000001938">
    <property type="component" value="Chromosome"/>
</dbReference>
<dbReference type="GO" id="GO:0005737">
    <property type="term" value="C:cytoplasm"/>
    <property type="evidence" value="ECO:0007669"/>
    <property type="project" value="UniProtKB-SubCell"/>
</dbReference>
<dbReference type="GO" id="GO:0000774">
    <property type="term" value="F:adenyl-nucleotide exchange factor activity"/>
    <property type="evidence" value="ECO:0007669"/>
    <property type="project" value="InterPro"/>
</dbReference>
<dbReference type="GO" id="GO:0042803">
    <property type="term" value="F:protein homodimerization activity"/>
    <property type="evidence" value="ECO:0007669"/>
    <property type="project" value="InterPro"/>
</dbReference>
<dbReference type="GO" id="GO:0051087">
    <property type="term" value="F:protein-folding chaperone binding"/>
    <property type="evidence" value="ECO:0007669"/>
    <property type="project" value="InterPro"/>
</dbReference>
<dbReference type="GO" id="GO:0051082">
    <property type="term" value="F:unfolded protein binding"/>
    <property type="evidence" value="ECO:0007669"/>
    <property type="project" value="TreeGrafter"/>
</dbReference>
<dbReference type="GO" id="GO:0006457">
    <property type="term" value="P:protein folding"/>
    <property type="evidence" value="ECO:0007669"/>
    <property type="project" value="InterPro"/>
</dbReference>
<dbReference type="CDD" id="cd00446">
    <property type="entry name" value="GrpE"/>
    <property type="match status" value="1"/>
</dbReference>
<dbReference type="FunFam" id="2.30.22.10:FF:000001">
    <property type="entry name" value="Protein GrpE"/>
    <property type="match status" value="1"/>
</dbReference>
<dbReference type="Gene3D" id="3.90.20.20">
    <property type="match status" value="1"/>
</dbReference>
<dbReference type="Gene3D" id="2.30.22.10">
    <property type="entry name" value="Head domain of nucleotide exchange factor GrpE"/>
    <property type="match status" value="1"/>
</dbReference>
<dbReference type="HAMAP" id="MF_01151">
    <property type="entry name" value="GrpE"/>
    <property type="match status" value="1"/>
</dbReference>
<dbReference type="InterPro" id="IPR000740">
    <property type="entry name" value="GrpE"/>
</dbReference>
<dbReference type="InterPro" id="IPR013805">
    <property type="entry name" value="GrpE_coiled_coil"/>
</dbReference>
<dbReference type="InterPro" id="IPR009012">
    <property type="entry name" value="GrpE_head"/>
</dbReference>
<dbReference type="NCBIfam" id="NF010738">
    <property type="entry name" value="PRK14140.1"/>
    <property type="match status" value="1"/>
</dbReference>
<dbReference type="NCBIfam" id="NF010741">
    <property type="entry name" value="PRK14143.1"/>
    <property type="match status" value="1"/>
</dbReference>
<dbReference type="PANTHER" id="PTHR21237">
    <property type="entry name" value="GRPE PROTEIN"/>
    <property type="match status" value="1"/>
</dbReference>
<dbReference type="PANTHER" id="PTHR21237:SF23">
    <property type="entry name" value="GRPE PROTEIN HOMOLOG, MITOCHONDRIAL"/>
    <property type="match status" value="1"/>
</dbReference>
<dbReference type="Pfam" id="PF01025">
    <property type="entry name" value="GrpE"/>
    <property type="match status" value="1"/>
</dbReference>
<dbReference type="PRINTS" id="PR00773">
    <property type="entry name" value="GRPEPROTEIN"/>
</dbReference>
<dbReference type="SUPFAM" id="SSF58014">
    <property type="entry name" value="Coiled-coil domain of nucleotide exchange factor GrpE"/>
    <property type="match status" value="1"/>
</dbReference>
<dbReference type="SUPFAM" id="SSF51064">
    <property type="entry name" value="Head domain of nucleotide exchange factor GrpE"/>
    <property type="match status" value="1"/>
</dbReference>
<dbReference type="PROSITE" id="PS01071">
    <property type="entry name" value="GRPE"/>
    <property type="match status" value="1"/>
</dbReference>
<evidence type="ECO:0000255" key="1">
    <source>
        <dbReference type="HAMAP-Rule" id="MF_01151"/>
    </source>
</evidence>
<evidence type="ECO:0000256" key="2">
    <source>
        <dbReference type="SAM" id="MobiDB-lite"/>
    </source>
</evidence>
<name>GRPE_SYNJB</name>
<reference key="1">
    <citation type="journal article" date="2007" name="ISME J.">
        <title>Population level functional diversity in a microbial community revealed by comparative genomic and metagenomic analyses.</title>
        <authorList>
            <person name="Bhaya D."/>
            <person name="Grossman A.R."/>
            <person name="Steunou A.-S."/>
            <person name="Khuri N."/>
            <person name="Cohan F.M."/>
            <person name="Hamamura N."/>
            <person name="Melendrez M.C."/>
            <person name="Bateson M.M."/>
            <person name="Ward D.M."/>
            <person name="Heidelberg J.F."/>
        </authorList>
    </citation>
    <scope>NUCLEOTIDE SEQUENCE [LARGE SCALE GENOMIC DNA]</scope>
    <source>
        <strain>JA-2-3B'a(2-13)</strain>
    </source>
</reference>